<name>RL35_STRPJ</name>
<gene>
    <name evidence="1" type="primary">rpmI</name>
    <name type="ordered locus">SPN23F08850</name>
</gene>
<keyword id="KW-0687">Ribonucleoprotein</keyword>
<keyword id="KW-0689">Ribosomal protein</keyword>
<evidence type="ECO:0000255" key="1">
    <source>
        <dbReference type="HAMAP-Rule" id="MF_00514"/>
    </source>
</evidence>
<evidence type="ECO:0000256" key="2">
    <source>
        <dbReference type="SAM" id="MobiDB-lite"/>
    </source>
</evidence>
<evidence type="ECO:0000305" key="3"/>
<feature type="chain" id="PRO_1000146161" description="Large ribosomal subunit protein bL35">
    <location>
        <begin position="1"/>
        <end position="66"/>
    </location>
</feature>
<feature type="region of interest" description="Disordered" evidence="2">
    <location>
        <begin position="1"/>
        <end position="21"/>
    </location>
</feature>
<feature type="compositionally biased region" description="Basic residues" evidence="2">
    <location>
        <begin position="1"/>
        <end position="16"/>
    </location>
</feature>
<protein>
    <recommendedName>
        <fullName evidence="1">Large ribosomal subunit protein bL35</fullName>
    </recommendedName>
    <alternativeName>
        <fullName evidence="3">50S ribosomal protein L35</fullName>
    </alternativeName>
</protein>
<sequence>MPKQKTHRASAKRFKRTGSGGLKRFRAYTSHRFHGKTKKQRRHLRKASMVHSGDYKRIKAMLTRLK</sequence>
<dbReference type="EMBL" id="FM211187">
    <property type="protein sequence ID" value="CAR68711.1"/>
    <property type="molecule type" value="Genomic_DNA"/>
</dbReference>
<dbReference type="RefSeq" id="WP_001125943.1">
    <property type="nucleotide sequence ID" value="NC_011900.1"/>
</dbReference>
<dbReference type="SMR" id="B8ZP57"/>
<dbReference type="GeneID" id="93739777"/>
<dbReference type="KEGG" id="sne:SPN23F08850"/>
<dbReference type="HOGENOM" id="CLU_169643_3_0_9"/>
<dbReference type="GO" id="GO:0022625">
    <property type="term" value="C:cytosolic large ribosomal subunit"/>
    <property type="evidence" value="ECO:0007669"/>
    <property type="project" value="TreeGrafter"/>
</dbReference>
<dbReference type="GO" id="GO:0003735">
    <property type="term" value="F:structural constituent of ribosome"/>
    <property type="evidence" value="ECO:0007669"/>
    <property type="project" value="InterPro"/>
</dbReference>
<dbReference type="GO" id="GO:0006412">
    <property type="term" value="P:translation"/>
    <property type="evidence" value="ECO:0007669"/>
    <property type="project" value="UniProtKB-UniRule"/>
</dbReference>
<dbReference type="FunFam" id="4.10.410.60:FF:000001">
    <property type="entry name" value="50S ribosomal protein L35"/>
    <property type="match status" value="1"/>
</dbReference>
<dbReference type="Gene3D" id="4.10.410.60">
    <property type="match status" value="1"/>
</dbReference>
<dbReference type="HAMAP" id="MF_00514">
    <property type="entry name" value="Ribosomal_bL35"/>
    <property type="match status" value="1"/>
</dbReference>
<dbReference type="InterPro" id="IPR001706">
    <property type="entry name" value="Ribosomal_bL35"/>
</dbReference>
<dbReference type="InterPro" id="IPR021137">
    <property type="entry name" value="Ribosomal_bL35-like"/>
</dbReference>
<dbReference type="InterPro" id="IPR018265">
    <property type="entry name" value="Ribosomal_bL35_CS"/>
</dbReference>
<dbReference type="InterPro" id="IPR037229">
    <property type="entry name" value="Ribosomal_bL35_sf"/>
</dbReference>
<dbReference type="NCBIfam" id="TIGR00001">
    <property type="entry name" value="rpmI_bact"/>
    <property type="match status" value="1"/>
</dbReference>
<dbReference type="PANTHER" id="PTHR33343">
    <property type="entry name" value="54S RIBOSOMAL PROTEIN BL35M"/>
    <property type="match status" value="1"/>
</dbReference>
<dbReference type="PANTHER" id="PTHR33343:SF1">
    <property type="entry name" value="LARGE RIBOSOMAL SUBUNIT PROTEIN BL35M"/>
    <property type="match status" value="1"/>
</dbReference>
<dbReference type="Pfam" id="PF01632">
    <property type="entry name" value="Ribosomal_L35p"/>
    <property type="match status" value="1"/>
</dbReference>
<dbReference type="PRINTS" id="PR00064">
    <property type="entry name" value="RIBOSOMALL35"/>
</dbReference>
<dbReference type="SUPFAM" id="SSF143034">
    <property type="entry name" value="L35p-like"/>
    <property type="match status" value="1"/>
</dbReference>
<dbReference type="PROSITE" id="PS00936">
    <property type="entry name" value="RIBOSOMAL_L35"/>
    <property type="match status" value="1"/>
</dbReference>
<reference key="1">
    <citation type="journal article" date="2009" name="J. Bacteriol.">
        <title>Role of conjugative elements in the evolution of the multidrug-resistant pandemic clone Streptococcus pneumoniae Spain23F ST81.</title>
        <authorList>
            <person name="Croucher N.J."/>
            <person name="Walker D."/>
            <person name="Romero P."/>
            <person name="Lennard N."/>
            <person name="Paterson G.K."/>
            <person name="Bason N.C."/>
            <person name="Mitchell A.M."/>
            <person name="Quail M.A."/>
            <person name="Andrew P.W."/>
            <person name="Parkhill J."/>
            <person name="Bentley S.D."/>
            <person name="Mitchell T.J."/>
        </authorList>
    </citation>
    <scope>NUCLEOTIDE SEQUENCE [LARGE SCALE GENOMIC DNA]</scope>
    <source>
        <strain>ATCC 700669 / Spain 23F-1</strain>
    </source>
</reference>
<proteinExistence type="inferred from homology"/>
<comment type="similarity">
    <text evidence="1">Belongs to the bacterial ribosomal protein bL35 family.</text>
</comment>
<accession>B8ZP57</accession>
<organism>
    <name type="scientific">Streptococcus pneumoniae (strain ATCC 700669 / Spain 23F-1)</name>
    <dbReference type="NCBI Taxonomy" id="561276"/>
    <lineage>
        <taxon>Bacteria</taxon>
        <taxon>Bacillati</taxon>
        <taxon>Bacillota</taxon>
        <taxon>Bacilli</taxon>
        <taxon>Lactobacillales</taxon>
        <taxon>Streptococcaceae</taxon>
        <taxon>Streptococcus</taxon>
    </lineage>
</organism>